<keyword id="KW-0963">Cytoplasm</keyword>
<keyword id="KW-0489">Methyltransferase</keyword>
<keyword id="KW-1185">Reference proteome</keyword>
<keyword id="KW-0949">S-adenosyl-L-methionine</keyword>
<keyword id="KW-0808">Transferase</keyword>
<keyword id="KW-0819">tRNA processing</keyword>
<feature type="chain" id="PRO_0000257482" description="tRNA (guanine-N(1)-)-methyltransferase">
    <location>
        <begin position="1"/>
        <end position="251"/>
    </location>
</feature>
<feature type="binding site" evidence="1">
    <location>
        <position position="111"/>
    </location>
    <ligand>
        <name>S-adenosyl-L-methionine</name>
        <dbReference type="ChEBI" id="CHEBI:59789"/>
    </ligand>
</feature>
<feature type="binding site" evidence="1">
    <location>
        <begin position="131"/>
        <end position="136"/>
    </location>
    <ligand>
        <name>S-adenosyl-L-methionine</name>
        <dbReference type="ChEBI" id="CHEBI:59789"/>
    </ligand>
</feature>
<name>TRMD_SYNJB</name>
<proteinExistence type="inferred from homology"/>
<comment type="function">
    <text evidence="1">Specifically methylates guanosine-37 in various tRNAs.</text>
</comment>
<comment type="catalytic activity">
    <reaction evidence="1">
        <text>guanosine(37) in tRNA + S-adenosyl-L-methionine = N(1)-methylguanosine(37) in tRNA + S-adenosyl-L-homocysteine + H(+)</text>
        <dbReference type="Rhea" id="RHEA:36899"/>
        <dbReference type="Rhea" id="RHEA-COMP:10145"/>
        <dbReference type="Rhea" id="RHEA-COMP:10147"/>
        <dbReference type="ChEBI" id="CHEBI:15378"/>
        <dbReference type="ChEBI" id="CHEBI:57856"/>
        <dbReference type="ChEBI" id="CHEBI:59789"/>
        <dbReference type="ChEBI" id="CHEBI:73542"/>
        <dbReference type="ChEBI" id="CHEBI:74269"/>
        <dbReference type="EC" id="2.1.1.228"/>
    </reaction>
</comment>
<comment type="subunit">
    <text evidence="1">Homodimer.</text>
</comment>
<comment type="subcellular location">
    <subcellularLocation>
        <location evidence="1">Cytoplasm</location>
    </subcellularLocation>
</comment>
<comment type="similarity">
    <text evidence="1">Belongs to the RNA methyltransferase TrmD family.</text>
</comment>
<reference key="1">
    <citation type="journal article" date="2007" name="ISME J.">
        <title>Population level functional diversity in a microbial community revealed by comparative genomic and metagenomic analyses.</title>
        <authorList>
            <person name="Bhaya D."/>
            <person name="Grossman A.R."/>
            <person name="Steunou A.-S."/>
            <person name="Khuri N."/>
            <person name="Cohan F.M."/>
            <person name="Hamamura N."/>
            <person name="Melendrez M.C."/>
            <person name="Bateson M.M."/>
            <person name="Ward D.M."/>
            <person name="Heidelberg J.F."/>
        </authorList>
    </citation>
    <scope>NUCLEOTIDE SEQUENCE [LARGE SCALE GENOMIC DNA]</scope>
    <source>
        <strain>JA-2-3B'a(2-13)</strain>
    </source>
</reference>
<evidence type="ECO:0000255" key="1">
    <source>
        <dbReference type="HAMAP-Rule" id="MF_00605"/>
    </source>
</evidence>
<dbReference type="EC" id="2.1.1.228" evidence="1"/>
<dbReference type="EMBL" id="CP000240">
    <property type="protein sequence ID" value="ABD02192.1"/>
    <property type="molecule type" value="Genomic_DNA"/>
</dbReference>
<dbReference type="RefSeq" id="WP_011432845.1">
    <property type="nucleotide sequence ID" value="NC_007776.1"/>
</dbReference>
<dbReference type="SMR" id="Q2JM55"/>
<dbReference type="STRING" id="321332.CYB_1217"/>
<dbReference type="KEGG" id="cyb:CYB_1217"/>
<dbReference type="eggNOG" id="COG0336">
    <property type="taxonomic scope" value="Bacteria"/>
</dbReference>
<dbReference type="HOGENOM" id="CLU_047363_0_1_3"/>
<dbReference type="OrthoDB" id="9807416at2"/>
<dbReference type="Proteomes" id="UP000001938">
    <property type="component" value="Chromosome"/>
</dbReference>
<dbReference type="GO" id="GO:0005829">
    <property type="term" value="C:cytosol"/>
    <property type="evidence" value="ECO:0007669"/>
    <property type="project" value="TreeGrafter"/>
</dbReference>
<dbReference type="GO" id="GO:0052906">
    <property type="term" value="F:tRNA (guanine(37)-N1)-methyltransferase activity"/>
    <property type="evidence" value="ECO:0007669"/>
    <property type="project" value="UniProtKB-UniRule"/>
</dbReference>
<dbReference type="GO" id="GO:0002939">
    <property type="term" value="P:tRNA N1-guanine methylation"/>
    <property type="evidence" value="ECO:0007669"/>
    <property type="project" value="TreeGrafter"/>
</dbReference>
<dbReference type="CDD" id="cd18080">
    <property type="entry name" value="TrmD-like"/>
    <property type="match status" value="1"/>
</dbReference>
<dbReference type="FunFam" id="1.10.1270.20:FF:000001">
    <property type="entry name" value="tRNA (guanine-N(1)-)-methyltransferase"/>
    <property type="match status" value="1"/>
</dbReference>
<dbReference type="FunFam" id="3.40.1280.10:FF:000001">
    <property type="entry name" value="tRNA (guanine-N(1)-)-methyltransferase"/>
    <property type="match status" value="1"/>
</dbReference>
<dbReference type="Gene3D" id="3.40.1280.10">
    <property type="match status" value="1"/>
</dbReference>
<dbReference type="Gene3D" id="1.10.1270.20">
    <property type="entry name" value="tRNA(m1g37)methyltransferase, domain 2"/>
    <property type="match status" value="1"/>
</dbReference>
<dbReference type="HAMAP" id="MF_00605">
    <property type="entry name" value="TrmD"/>
    <property type="match status" value="1"/>
</dbReference>
<dbReference type="InterPro" id="IPR029028">
    <property type="entry name" value="Alpha/beta_knot_MTases"/>
</dbReference>
<dbReference type="InterPro" id="IPR023148">
    <property type="entry name" value="tRNA_m1G_MeTrfase_C_sf"/>
</dbReference>
<dbReference type="InterPro" id="IPR002649">
    <property type="entry name" value="tRNA_m1G_MeTrfase_TrmD"/>
</dbReference>
<dbReference type="InterPro" id="IPR029026">
    <property type="entry name" value="tRNA_m1G_MTases_N"/>
</dbReference>
<dbReference type="InterPro" id="IPR016009">
    <property type="entry name" value="tRNA_MeTrfase_TRMD/TRM10"/>
</dbReference>
<dbReference type="NCBIfam" id="NF000648">
    <property type="entry name" value="PRK00026.1"/>
    <property type="match status" value="1"/>
</dbReference>
<dbReference type="NCBIfam" id="TIGR00088">
    <property type="entry name" value="trmD"/>
    <property type="match status" value="1"/>
</dbReference>
<dbReference type="PANTHER" id="PTHR46417">
    <property type="entry name" value="TRNA (GUANINE-N(1)-)-METHYLTRANSFERASE"/>
    <property type="match status" value="1"/>
</dbReference>
<dbReference type="PANTHER" id="PTHR46417:SF1">
    <property type="entry name" value="TRNA (GUANINE-N(1)-)-METHYLTRANSFERASE"/>
    <property type="match status" value="1"/>
</dbReference>
<dbReference type="Pfam" id="PF01746">
    <property type="entry name" value="tRNA_m1G_MT"/>
    <property type="match status" value="1"/>
</dbReference>
<dbReference type="PIRSF" id="PIRSF000386">
    <property type="entry name" value="tRNA_mtase"/>
    <property type="match status" value="1"/>
</dbReference>
<dbReference type="SUPFAM" id="SSF75217">
    <property type="entry name" value="alpha/beta knot"/>
    <property type="match status" value="1"/>
</dbReference>
<sequence length="251" mass="27962">MRFDILTLFPEFFETPLRIGLVGKALQQGIAEVHCTNPRDFATDKHRRVDDEPYGGGVGMVLKPEPFFAAVASLPRLDPCEIILLTPQGQPLNQALLQELAQKAQLILLCGQYEGFDERIRQYLATREVSLGDFVLTGGEIPALALINGVVRLLPGTVGKVDSLKSESFQAGLLDYPQYTRPAEFQGHKVPPVLLSGDHQAIARWRLQQQLVRTWQRRPDLLAKRPLTAEEQQLLAEGLAEQHPGVNDVEK</sequence>
<protein>
    <recommendedName>
        <fullName evidence="1">tRNA (guanine-N(1)-)-methyltransferase</fullName>
        <ecNumber evidence="1">2.1.1.228</ecNumber>
    </recommendedName>
    <alternativeName>
        <fullName evidence="1">M1G-methyltransferase</fullName>
    </alternativeName>
    <alternativeName>
        <fullName evidence="1">tRNA [GM37] methyltransferase</fullName>
    </alternativeName>
</protein>
<accession>Q2JM55</accession>
<organism>
    <name type="scientific">Synechococcus sp. (strain JA-2-3B'a(2-13))</name>
    <name type="common">Cyanobacteria bacterium Yellowstone B-Prime</name>
    <dbReference type="NCBI Taxonomy" id="321332"/>
    <lineage>
        <taxon>Bacteria</taxon>
        <taxon>Bacillati</taxon>
        <taxon>Cyanobacteriota</taxon>
        <taxon>Cyanophyceae</taxon>
        <taxon>Synechococcales</taxon>
        <taxon>Synechococcaceae</taxon>
        <taxon>Synechococcus</taxon>
    </lineage>
</organism>
<gene>
    <name evidence="1" type="primary">trmD</name>
    <name type="ordered locus">CYB_1217</name>
</gene>